<comment type="function">
    <text evidence="1">Catalyzes the oxidation of 3-carboxy-2-hydroxy-4-methylpentanoate (3-isopropylmalate) to 3-carboxy-4-methyl-2-oxopentanoate. The product decarboxylates to 4-methyl-2 oxopentanoate.</text>
</comment>
<comment type="catalytic activity">
    <reaction evidence="1">
        <text>(2R,3S)-3-isopropylmalate + NAD(+) = 4-methyl-2-oxopentanoate + CO2 + NADH</text>
        <dbReference type="Rhea" id="RHEA:32271"/>
        <dbReference type="ChEBI" id="CHEBI:16526"/>
        <dbReference type="ChEBI" id="CHEBI:17865"/>
        <dbReference type="ChEBI" id="CHEBI:35121"/>
        <dbReference type="ChEBI" id="CHEBI:57540"/>
        <dbReference type="ChEBI" id="CHEBI:57945"/>
        <dbReference type="EC" id="1.1.1.85"/>
    </reaction>
</comment>
<comment type="cofactor">
    <cofactor evidence="1">
        <name>Mg(2+)</name>
        <dbReference type="ChEBI" id="CHEBI:18420"/>
    </cofactor>
    <cofactor evidence="1">
        <name>Mn(2+)</name>
        <dbReference type="ChEBI" id="CHEBI:29035"/>
    </cofactor>
    <text evidence="1">Binds 1 Mg(2+) or Mn(2+) ion per subunit.</text>
</comment>
<comment type="pathway">
    <text evidence="1">Amino-acid biosynthesis; L-leucine biosynthesis; L-leucine from 3-methyl-2-oxobutanoate: step 3/4.</text>
</comment>
<comment type="subunit">
    <text evidence="1">Homodimer.</text>
</comment>
<comment type="subcellular location">
    <subcellularLocation>
        <location evidence="1">Cytoplasm</location>
    </subcellularLocation>
</comment>
<comment type="similarity">
    <text evidence="1">Belongs to the isocitrate and isopropylmalate dehydrogenases family. LeuB type 1 subfamily.</text>
</comment>
<proteinExistence type="inferred from homology"/>
<feature type="chain" id="PRO_0000083695" description="3-isopropylmalate dehydrogenase">
    <location>
        <begin position="1"/>
        <end position="362"/>
    </location>
</feature>
<feature type="binding site" evidence="1">
    <location>
        <begin position="78"/>
        <end position="91"/>
    </location>
    <ligand>
        <name>NAD(+)</name>
        <dbReference type="ChEBI" id="CHEBI:57540"/>
    </ligand>
</feature>
<feature type="binding site" evidence="1">
    <location>
        <position position="99"/>
    </location>
    <ligand>
        <name>substrate</name>
    </ligand>
</feature>
<feature type="binding site" evidence="1">
    <location>
        <position position="109"/>
    </location>
    <ligand>
        <name>substrate</name>
    </ligand>
</feature>
<feature type="binding site" evidence="1">
    <location>
        <position position="138"/>
    </location>
    <ligand>
        <name>substrate</name>
    </ligand>
</feature>
<feature type="binding site" evidence="1">
    <location>
        <position position="227"/>
    </location>
    <ligand>
        <name>Mg(2+)</name>
        <dbReference type="ChEBI" id="CHEBI:18420"/>
    </ligand>
</feature>
<feature type="binding site" evidence="1">
    <location>
        <position position="227"/>
    </location>
    <ligand>
        <name>substrate</name>
    </ligand>
</feature>
<feature type="binding site" evidence="1">
    <location>
        <position position="251"/>
    </location>
    <ligand>
        <name>Mg(2+)</name>
        <dbReference type="ChEBI" id="CHEBI:18420"/>
    </ligand>
</feature>
<feature type="binding site" evidence="1">
    <location>
        <position position="255"/>
    </location>
    <ligand>
        <name>Mg(2+)</name>
        <dbReference type="ChEBI" id="CHEBI:18420"/>
    </ligand>
</feature>
<feature type="binding site" evidence="1">
    <location>
        <begin position="285"/>
        <end position="297"/>
    </location>
    <ligand>
        <name>NAD(+)</name>
        <dbReference type="ChEBI" id="CHEBI:57540"/>
    </ligand>
</feature>
<feature type="site" description="Important for catalysis" evidence="1">
    <location>
        <position position="145"/>
    </location>
</feature>
<feature type="site" description="Important for catalysis" evidence="1">
    <location>
        <position position="195"/>
    </location>
</feature>
<gene>
    <name evidence="1" type="primary">leuB</name>
    <name type="ordered locus">GSU2879</name>
</gene>
<name>LEU3_GEOSL</name>
<organism>
    <name type="scientific">Geobacter sulfurreducens (strain ATCC 51573 / DSM 12127 / PCA)</name>
    <dbReference type="NCBI Taxonomy" id="243231"/>
    <lineage>
        <taxon>Bacteria</taxon>
        <taxon>Pseudomonadati</taxon>
        <taxon>Thermodesulfobacteriota</taxon>
        <taxon>Desulfuromonadia</taxon>
        <taxon>Geobacterales</taxon>
        <taxon>Geobacteraceae</taxon>
        <taxon>Geobacter</taxon>
    </lineage>
</organism>
<protein>
    <recommendedName>
        <fullName evidence="1">3-isopropylmalate dehydrogenase</fullName>
        <ecNumber evidence="1">1.1.1.85</ecNumber>
    </recommendedName>
    <alternativeName>
        <fullName evidence="1">3-IPM-DH</fullName>
    </alternativeName>
    <alternativeName>
        <fullName evidence="1">Beta-IPM dehydrogenase</fullName>
        <shortName evidence="1">IMDH</shortName>
    </alternativeName>
</protein>
<dbReference type="EC" id="1.1.1.85" evidence="1"/>
<dbReference type="EMBL" id="AE017180">
    <property type="protein sequence ID" value="AAR36271.1"/>
    <property type="molecule type" value="Genomic_DNA"/>
</dbReference>
<dbReference type="RefSeq" id="NP_953921.1">
    <property type="nucleotide sequence ID" value="NC_002939.5"/>
</dbReference>
<dbReference type="RefSeq" id="WP_010943508.1">
    <property type="nucleotide sequence ID" value="NC_002939.5"/>
</dbReference>
<dbReference type="SMR" id="Q748X2"/>
<dbReference type="FunCoup" id="Q748X2">
    <property type="interactions" value="472"/>
</dbReference>
<dbReference type="STRING" id="243231.GSU2879"/>
<dbReference type="EnsemblBacteria" id="AAR36271">
    <property type="protein sequence ID" value="AAR36271"/>
    <property type="gene ID" value="GSU2879"/>
</dbReference>
<dbReference type="KEGG" id="gsu:GSU2879"/>
<dbReference type="PATRIC" id="fig|243231.5.peg.2907"/>
<dbReference type="eggNOG" id="COG0473">
    <property type="taxonomic scope" value="Bacteria"/>
</dbReference>
<dbReference type="HOGENOM" id="CLU_031953_0_3_7"/>
<dbReference type="InParanoid" id="Q748X2"/>
<dbReference type="OrthoDB" id="9806254at2"/>
<dbReference type="UniPathway" id="UPA00048">
    <property type="reaction ID" value="UER00072"/>
</dbReference>
<dbReference type="Proteomes" id="UP000000577">
    <property type="component" value="Chromosome"/>
</dbReference>
<dbReference type="GO" id="GO:0005829">
    <property type="term" value="C:cytosol"/>
    <property type="evidence" value="ECO:0000318"/>
    <property type="project" value="GO_Central"/>
</dbReference>
<dbReference type="GO" id="GO:0003862">
    <property type="term" value="F:3-isopropylmalate dehydrogenase activity"/>
    <property type="evidence" value="ECO:0000318"/>
    <property type="project" value="GO_Central"/>
</dbReference>
<dbReference type="GO" id="GO:0000287">
    <property type="term" value="F:magnesium ion binding"/>
    <property type="evidence" value="ECO:0007669"/>
    <property type="project" value="InterPro"/>
</dbReference>
<dbReference type="GO" id="GO:0051287">
    <property type="term" value="F:NAD binding"/>
    <property type="evidence" value="ECO:0007669"/>
    <property type="project" value="InterPro"/>
</dbReference>
<dbReference type="GO" id="GO:0009098">
    <property type="term" value="P:L-leucine biosynthetic process"/>
    <property type="evidence" value="ECO:0000318"/>
    <property type="project" value="GO_Central"/>
</dbReference>
<dbReference type="FunFam" id="3.40.718.10:FF:000004">
    <property type="entry name" value="3-isopropylmalate dehydrogenase"/>
    <property type="match status" value="1"/>
</dbReference>
<dbReference type="Gene3D" id="3.40.718.10">
    <property type="entry name" value="Isopropylmalate Dehydrogenase"/>
    <property type="match status" value="1"/>
</dbReference>
<dbReference type="HAMAP" id="MF_01033">
    <property type="entry name" value="LeuB_type1"/>
    <property type="match status" value="1"/>
</dbReference>
<dbReference type="InterPro" id="IPR019818">
    <property type="entry name" value="IsoCit/isopropylmalate_DH_CS"/>
</dbReference>
<dbReference type="InterPro" id="IPR024084">
    <property type="entry name" value="IsoPropMal-DH-like_dom"/>
</dbReference>
<dbReference type="InterPro" id="IPR004429">
    <property type="entry name" value="Isopropylmalate_DH"/>
</dbReference>
<dbReference type="NCBIfam" id="TIGR00169">
    <property type="entry name" value="leuB"/>
    <property type="match status" value="1"/>
</dbReference>
<dbReference type="PANTHER" id="PTHR42979">
    <property type="entry name" value="3-ISOPROPYLMALATE DEHYDROGENASE"/>
    <property type="match status" value="1"/>
</dbReference>
<dbReference type="PANTHER" id="PTHR42979:SF1">
    <property type="entry name" value="3-ISOPROPYLMALATE DEHYDROGENASE"/>
    <property type="match status" value="1"/>
</dbReference>
<dbReference type="Pfam" id="PF00180">
    <property type="entry name" value="Iso_dh"/>
    <property type="match status" value="1"/>
</dbReference>
<dbReference type="SMART" id="SM01329">
    <property type="entry name" value="Iso_dh"/>
    <property type="match status" value="1"/>
</dbReference>
<dbReference type="SUPFAM" id="SSF53659">
    <property type="entry name" value="Isocitrate/Isopropylmalate dehydrogenase-like"/>
    <property type="match status" value="1"/>
</dbReference>
<dbReference type="PROSITE" id="PS00470">
    <property type="entry name" value="IDH_IMDH"/>
    <property type="match status" value="1"/>
</dbReference>
<keyword id="KW-0028">Amino-acid biosynthesis</keyword>
<keyword id="KW-0100">Branched-chain amino acid biosynthesis</keyword>
<keyword id="KW-0963">Cytoplasm</keyword>
<keyword id="KW-0432">Leucine biosynthesis</keyword>
<keyword id="KW-0460">Magnesium</keyword>
<keyword id="KW-0464">Manganese</keyword>
<keyword id="KW-0479">Metal-binding</keyword>
<keyword id="KW-0520">NAD</keyword>
<keyword id="KW-0560">Oxidoreductase</keyword>
<keyword id="KW-1185">Reference proteome</keyword>
<evidence type="ECO:0000255" key="1">
    <source>
        <dbReference type="HAMAP-Rule" id="MF_01033"/>
    </source>
</evidence>
<reference key="1">
    <citation type="journal article" date="2003" name="Science">
        <title>Genome of Geobacter sulfurreducens: metal reduction in subsurface environments.</title>
        <authorList>
            <person name="Methe B.A."/>
            <person name="Nelson K.E."/>
            <person name="Eisen J.A."/>
            <person name="Paulsen I.T."/>
            <person name="Nelson W.C."/>
            <person name="Heidelberg J.F."/>
            <person name="Wu D."/>
            <person name="Wu M."/>
            <person name="Ward N.L."/>
            <person name="Beanan M.J."/>
            <person name="Dodson R.J."/>
            <person name="Madupu R."/>
            <person name="Brinkac L.M."/>
            <person name="Daugherty S.C."/>
            <person name="DeBoy R.T."/>
            <person name="Durkin A.S."/>
            <person name="Gwinn M.L."/>
            <person name="Kolonay J.F."/>
            <person name="Sullivan S.A."/>
            <person name="Haft D.H."/>
            <person name="Selengut J."/>
            <person name="Davidsen T.M."/>
            <person name="Zafar N."/>
            <person name="White O."/>
            <person name="Tran B."/>
            <person name="Romero C."/>
            <person name="Forberger H.A."/>
            <person name="Weidman J.F."/>
            <person name="Khouri H.M."/>
            <person name="Feldblyum T.V."/>
            <person name="Utterback T.R."/>
            <person name="Van Aken S.E."/>
            <person name="Lovley D.R."/>
            <person name="Fraser C.M."/>
        </authorList>
    </citation>
    <scope>NUCLEOTIDE SEQUENCE [LARGE SCALE GENOMIC DNA]</scope>
    <source>
        <strain>ATCC 51573 / DSM 12127 / PCA</strain>
    </source>
</reference>
<sequence>MAQVFKVAVLPGDGIGPEVMAEALRVLDAVEAKYDVKFERTHANVGGAGIDIEGKALPETTVNICKAADAILFGSVGGPKWESLPPDEQPERGALLPLRKIFGLYANLRPAIIFPSLTGASSLKEEVIAGGFNVLVIRELTGGIYFAQPKGIEGEGRDRVGFDTMRYSVPEIERITHVAFQAARKRGKKVCSIDKANVLSSSVLWREVVTGIAKEYPDVELSHMYVDNAAMQLVRWPKQFDVILCENMFGDILSDEAAMLTGSLGMLPSASLAEGTFGMYEPSGGSAPDIAGQGIANPIAQILSMGMMLKFSFGMVDAADAIDNAVATVLDQGFRTRDIYQQKDGEKLVNTKEMGDAIIAAL</sequence>
<accession>Q748X2</accession>